<accession>P60785</accession>
<accession>P07682</accession>
<accession>P76590</accession>
<accession>Q2MAG1</accession>
<reference key="1">
    <citation type="journal article" date="1985" name="J. Biol. Chem.">
        <title>Characterization of the lep operon of Escherichia coli. Identification of the promoter and the gene upstream of the signal peptidase I gene.</title>
        <authorList>
            <person name="March P.E."/>
            <person name="Inouye M."/>
        </authorList>
    </citation>
    <scope>NUCLEOTIDE SEQUENCE [GENOMIC DNA]</scope>
    <source>
        <strain>K12</strain>
    </source>
</reference>
<reference key="2">
    <citation type="submission" date="1995-09" db="EMBL/GenBank/DDBJ databases">
        <authorList>
            <person name="Nashimoto H."/>
            <person name="Saito N."/>
        </authorList>
    </citation>
    <scope>NUCLEOTIDE SEQUENCE [GENOMIC DNA]</scope>
    <source>
        <strain>K12</strain>
    </source>
</reference>
<reference key="3">
    <citation type="journal article" date="1997" name="Science">
        <title>The complete genome sequence of Escherichia coli K-12.</title>
        <authorList>
            <person name="Blattner F.R."/>
            <person name="Plunkett G. III"/>
            <person name="Bloch C.A."/>
            <person name="Perna N.T."/>
            <person name="Burland V."/>
            <person name="Riley M."/>
            <person name="Collado-Vides J."/>
            <person name="Glasner J.D."/>
            <person name="Rode C.K."/>
            <person name="Mayhew G.F."/>
            <person name="Gregor J."/>
            <person name="Davis N.W."/>
            <person name="Kirkpatrick H.A."/>
            <person name="Goeden M.A."/>
            <person name="Rose D.J."/>
            <person name="Mau B."/>
            <person name="Shao Y."/>
        </authorList>
    </citation>
    <scope>NUCLEOTIDE SEQUENCE [LARGE SCALE GENOMIC DNA]</scope>
    <source>
        <strain>K12 / MG1655 / ATCC 47076</strain>
    </source>
</reference>
<reference key="4">
    <citation type="journal article" date="2006" name="Mol. Syst. Biol.">
        <title>Highly accurate genome sequences of Escherichia coli K-12 strains MG1655 and W3110.</title>
        <authorList>
            <person name="Hayashi K."/>
            <person name="Morooka N."/>
            <person name="Yamamoto Y."/>
            <person name="Fujita K."/>
            <person name="Isono K."/>
            <person name="Choi S."/>
            <person name="Ohtsubo E."/>
            <person name="Baba T."/>
            <person name="Wanner B.L."/>
            <person name="Mori H."/>
            <person name="Horiuchi T."/>
        </authorList>
    </citation>
    <scope>NUCLEOTIDE SEQUENCE [LARGE SCALE GENOMIC DNA]</scope>
    <source>
        <strain>K12 / W3110 / ATCC 27325 / DSM 5911</strain>
    </source>
</reference>
<reference key="5">
    <citation type="journal article" date="1985" name="Proc. Natl. Acad. Sci. U.S.A.">
        <title>GTP-binding membrane protein of Escherichia coli with sequence homology to initiation factor 2 and elongation factors Tu and G.</title>
        <authorList>
            <person name="March P.E."/>
            <person name="Inouye M."/>
        </authorList>
    </citation>
    <scope>SIMILARITY TO GTP-BINDING PROTEINS</scope>
    <scope>SUBCELLULAR LOCATION</scope>
</reference>
<reference key="6">
    <citation type="journal article" date="1987" name="Eur. J. Biochem.">
        <title>Molecular cloning and sequence determination of the tuf gene coding for the elongation factor Tu of Thermus thermophilus HB8.</title>
        <authorList>
            <person name="Kushiro A."/>
            <person name="Shimizu M."/>
            <person name="Tomita K."/>
        </authorList>
    </citation>
    <scope>SIMILARITY TO GTP-BINDING PROTEINS</scope>
</reference>
<reference key="7">
    <citation type="journal article" date="2006" name="Cell">
        <title>The highly conserved LepA is a ribosomal elongation factor that back-translocates the ribosome.</title>
        <authorList>
            <person name="Qin Y."/>
            <person name="Polacek N."/>
            <person name="Vesper O."/>
            <person name="Staub E."/>
            <person name="Einfeldt E."/>
            <person name="Wilson D.N."/>
            <person name="Nierhaus K.H."/>
        </authorList>
    </citation>
    <scope>FUNCTION</scope>
</reference>
<reference key="8">
    <citation type="journal article" date="2010" name="J. Mol. Biol.">
        <title>Interrupted catalysis: the EF4 (LepA) effect on back-translocation.</title>
        <authorList>
            <person name="Liu H."/>
            <person name="Pan D."/>
            <person name="Pech M."/>
            <person name="Cooperman B.S."/>
        </authorList>
    </citation>
    <scope>FUNCTION</scope>
    <scope>CATALYTIC ACTIVITY</scope>
</reference>
<reference key="9">
    <citation type="journal article" date="2008" name="Nat. Struct. Mol. Biol.">
        <title>A new tRNA intermediate revealed on the ribosome during EF4-mediated back-translocation.</title>
        <authorList>
            <person name="Connell S.R."/>
            <person name="Topf M."/>
            <person name="Qin Y."/>
            <person name="Wilson D.N."/>
            <person name="Mielke T."/>
            <person name="Fucini P."/>
            <person name="Nierhaus K.H."/>
            <person name="Spahn C.M."/>
        </authorList>
    </citation>
    <scope>STRUCTURE BY NMR OF 1-545</scope>
</reference>
<reference key="10">
    <citation type="journal article" date="2008" name="Proc. Natl. Acad. Sci. U.S.A.">
        <title>The structure of LepA, the ribosomal back translocase.</title>
        <authorList>
            <person name="Evans R.N."/>
            <person name="Blaha G."/>
            <person name="Bailey S."/>
            <person name="Steitz T.A."/>
        </authorList>
    </citation>
    <scope>X-RAY CRYSTALLOGRAPHY (2.8 ANGSTROMS)</scope>
</reference>
<dbReference type="EC" id="3.6.5.n1" evidence="1"/>
<dbReference type="EMBL" id="K00426">
    <property type="protein sequence ID" value="AAA24063.1"/>
    <property type="molecule type" value="Genomic_DNA"/>
</dbReference>
<dbReference type="EMBL" id="D64044">
    <property type="protein sequence ID" value="BAA10916.1"/>
    <property type="molecule type" value="Genomic_DNA"/>
</dbReference>
<dbReference type="EMBL" id="U00096">
    <property type="protein sequence ID" value="AAC75622.1"/>
    <property type="molecule type" value="Genomic_DNA"/>
</dbReference>
<dbReference type="EMBL" id="AP009048">
    <property type="protein sequence ID" value="BAE76745.1"/>
    <property type="molecule type" value="Genomic_DNA"/>
</dbReference>
<dbReference type="PIR" id="H65034">
    <property type="entry name" value="BVECLA"/>
</dbReference>
<dbReference type="RefSeq" id="NP_417064.1">
    <property type="nucleotide sequence ID" value="NC_000913.3"/>
</dbReference>
<dbReference type="RefSeq" id="WP_000790168.1">
    <property type="nucleotide sequence ID" value="NZ_STEB01000011.1"/>
</dbReference>
<dbReference type="PDB" id="3CB4">
    <property type="method" value="X-ray"/>
    <property type="resolution" value="2.80 A"/>
    <property type="chains" value="A/B/C/D/E/F=1-599"/>
</dbReference>
<dbReference type="PDB" id="3DEG">
    <property type="method" value="EM"/>
    <property type="chains" value="C=1-545"/>
</dbReference>
<dbReference type="PDB" id="3JCD">
    <property type="method" value="EM"/>
    <property type="resolution" value="3.70 A"/>
    <property type="chains" value="x=1-599"/>
</dbReference>
<dbReference type="PDB" id="3JCE">
    <property type="method" value="EM"/>
    <property type="resolution" value="3.20 A"/>
    <property type="chains" value="x=1-599"/>
</dbReference>
<dbReference type="PDBsum" id="3CB4"/>
<dbReference type="PDBsum" id="3DEG"/>
<dbReference type="PDBsum" id="3JCD"/>
<dbReference type="PDBsum" id="3JCE"/>
<dbReference type="SMR" id="P60785"/>
<dbReference type="BioGRID" id="4260596">
    <property type="interactions" value="261"/>
</dbReference>
<dbReference type="BioGRID" id="851389">
    <property type="interactions" value="3"/>
</dbReference>
<dbReference type="DIP" id="DIP-29868N"/>
<dbReference type="FunCoup" id="P60785">
    <property type="interactions" value="893"/>
</dbReference>
<dbReference type="IntAct" id="P60785">
    <property type="interactions" value="62"/>
</dbReference>
<dbReference type="STRING" id="511145.b2569"/>
<dbReference type="jPOST" id="P60785"/>
<dbReference type="PaxDb" id="511145-b2569"/>
<dbReference type="EnsemblBacteria" id="AAC75622">
    <property type="protein sequence ID" value="AAC75622"/>
    <property type="gene ID" value="b2569"/>
</dbReference>
<dbReference type="GeneID" id="93774522"/>
<dbReference type="GeneID" id="947051"/>
<dbReference type="KEGG" id="ecj:JW2553"/>
<dbReference type="KEGG" id="eco:b2569"/>
<dbReference type="KEGG" id="ecoc:C3026_14230"/>
<dbReference type="PATRIC" id="fig|1411691.4.peg.4165"/>
<dbReference type="EchoBASE" id="EB0524"/>
<dbReference type="eggNOG" id="COG0481">
    <property type="taxonomic scope" value="Bacteria"/>
</dbReference>
<dbReference type="HOGENOM" id="CLU_009995_3_3_6"/>
<dbReference type="InParanoid" id="P60785"/>
<dbReference type="OMA" id="QVKCDEN"/>
<dbReference type="OrthoDB" id="9804431at2"/>
<dbReference type="PhylomeDB" id="P60785"/>
<dbReference type="BioCyc" id="EcoCyc:EG10529-MONOMER"/>
<dbReference type="BioCyc" id="MetaCyc:EG10529-MONOMER"/>
<dbReference type="BRENDA" id="3.6.5.3">
    <property type="organism ID" value="2026"/>
</dbReference>
<dbReference type="EvolutionaryTrace" id="P60785"/>
<dbReference type="PRO" id="PR:P60785"/>
<dbReference type="Proteomes" id="UP000000625">
    <property type="component" value="Chromosome"/>
</dbReference>
<dbReference type="GO" id="GO:0005829">
    <property type="term" value="C:cytosol"/>
    <property type="evidence" value="ECO:0000314"/>
    <property type="project" value="EcoCyc"/>
</dbReference>
<dbReference type="GO" id="GO:0005886">
    <property type="term" value="C:plasma membrane"/>
    <property type="evidence" value="ECO:0000314"/>
    <property type="project" value="EcoCyc"/>
</dbReference>
<dbReference type="GO" id="GO:0005525">
    <property type="term" value="F:GTP binding"/>
    <property type="evidence" value="ECO:0007669"/>
    <property type="project" value="UniProtKB-UniRule"/>
</dbReference>
<dbReference type="GO" id="GO:0003924">
    <property type="term" value="F:GTPase activity"/>
    <property type="evidence" value="ECO:0000314"/>
    <property type="project" value="EcoCyc"/>
</dbReference>
<dbReference type="GO" id="GO:0097216">
    <property type="term" value="F:guanosine tetraphosphate binding"/>
    <property type="evidence" value="ECO:0000314"/>
    <property type="project" value="EcoCyc"/>
</dbReference>
<dbReference type="GO" id="GO:0042802">
    <property type="term" value="F:identical protein binding"/>
    <property type="evidence" value="ECO:0000353"/>
    <property type="project" value="IntAct"/>
</dbReference>
<dbReference type="GO" id="GO:0043023">
    <property type="term" value="F:ribosomal large subunit binding"/>
    <property type="evidence" value="ECO:0000314"/>
    <property type="project" value="EcoCyc"/>
</dbReference>
<dbReference type="GO" id="GO:0043024">
    <property type="term" value="F:ribosomal small subunit binding"/>
    <property type="evidence" value="ECO:0000314"/>
    <property type="project" value="EcoCyc"/>
</dbReference>
<dbReference type="GO" id="GO:0043022">
    <property type="term" value="F:ribosome binding"/>
    <property type="evidence" value="ECO:0000318"/>
    <property type="project" value="GO_Central"/>
</dbReference>
<dbReference type="GO" id="GO:0003746">
    <property type="term" value="F:translation elongation factor activity"/>
    <property type="evidence" value="ECO:0007669"/>
    <property type="project" value="UniProtKB-UniRule"/>
</dbReference>
<dbReference type="GO" id="GO:0045727">
    <property type="term" value="P:positive regulation of translation"/>
    <property type="evidence" value="ECO:0000318"/>
    <property type="project" value="GO_Central"/>
</dbReference>
<dbReference type="GO" id="GO:0009409">
    <property type="term" value="P:response to cold"/>
    <property type="evidence" value="ECO:0000315"/>
    <property type="project" value="EcoCyc"/>
</dbReference>
<dbReference type="GO" id="GO:0009268">
    <property type="term" value="P:response to pH"/>
    <property type="evidence" value="ECO:0000315"/>
    <property type="project" value="EcoCyc"/>
</dbReference>
<dbReference type="GO" id="GO:0009651">
    <property type="term" value="P:response to salt stress"/>
    <property type="evidence" value="ECO:0000315"/>
    <property type="project" value="EcoCyc"/>
</dbReference>
<dbReference type="GO" id="GO:0042274">
    <property type="term" value="P:ribosomal small subunit biogenesis"/>
    <property type="evidence" value="ECO:0000315"/>
    <property type="project" value="EcoCyc"/>
</dbReference>
<dbReference type="CDD" id="cd03699">
    <property type="entry name" value="EF4_II"/>
    <property type="match status" value="1"/>
</dbReference>
<dbReference type="CDD" id="cd16260">
    <property type="entry name" value="EF4_III"/>
    <property type="match status" value="1"/>
</dbReference>
<dbReference type="CDD" id="cd01890">
    <property type="entry name" value="LepA"/>
    <property type="match status" value="1"/>
</dbReference>
<dbReference type="CDD" id="cd03709">
    <property type="entry name" value="lepA_C"/>
    <property type="match status" value="1"/>
</dbReference>
<dbReference type="FunFam" id="3.30.70.240:FF:000005">
    <property type="entry name" value="Elongation factor 4"/>
    <property type="match status" value="1"/>
</dbReference>
<dbReference type="FunFam" id="3.40.50.300:FF:000078">
    <property type="entry name" value="Elongation factor 4"/>
    <property type="match status" value="1"/>
</dbReference>
<dbReference type="FunFam" id="2.40.30.10:FF:000015">
    <property type="entry name" value="Translation factor GUF1, mitochondrial"/>
    <property type="match status" value="1"/>
</dbReference>
<dbReference type="FunFam" id="3.30.70.2570:FF:000001">
    <property type="entry name" value="Translation factor GUF1, mitochondrial"/>
    <property type="match status" value="1"/>
</dbReference>
<dbReference type="FunFam" id="3.30.70.870:FF:000004">
    <property type="entry name" value="Translation factor GUF1, mitochondrial"/>
    <property type="match status" value="1"/>
</dbReference>
<dbReference type="Gene3D" id="3.30.70.240">
    <property type="match status" value="1"/>
</dbReference>
<dbReference type="Gene3D" id="3.30.70.2570">
    <property type="entry name" value="Elongation factor 4, C-terminal domain"/>
    <property type="match status" value="1"/>
</dbReference>
<dbReference type="Gene3D" id="3.30.70.870">
    <property type="entry name" value="Elongation Factor G (Translational Gtpase), domain 3"/>
    <property type="match status" value="1"/>
</dbReference>
<dbReference type="Gene3D" id="3.40.50.300">
    <property type="entry name" value="P-loop containing nucleotide triphosphate hydrolases"/>
    <property type="match status" value="1"/>
</dbReference>
<dbReference type="Gene3D" id="2.40.30.10">
    <property type="entry name" value="Translation factors"/>
    <property type="match status" value="1"/>
</dbReference>
<dbReference type="HAMAP" id="MF_00071">
    <property type="entry name" value="LepA"/>
    <property type="match status" value="1"/>
</dbReference>
<dbReference type="InterPro" id="IPR006297">
    <property type="entry name" value="EF-4"/>
</dbReference>
<dbReference type="InterPro" id="IPR035647">
    <property type="entry name" value="EFG_III/V"/>
</dbReference>
<dbReference type="InterPro" id="IPR000640">
    <property type="entry name" value="EFG_V-like"/>
</dbReference>
<dbReference type="InterPro" id="IPR004161">
    <property type="entry name" value="EFTu-like_2"/>
</dbReference>
<dbReference type="InterPro" id="IPR031157">
    <property type="entry name" value="G_TR_CS"/>
</dbReference>
<dbReference type="InterPro" id="IPR038363">
    <property type="entry name" value="LepA_C_sf"/>
</dbReference>
<dbReference type="InterPro" id="IPR013842">
    <property type="entry name" value="LepA_CTD"/>
</dbReference>
<dbReference type="InterPro" id="IPR035654">
    <property type="entry name" value="LepA_IV"/>
</dbReference>
<dbReference type="InterPro" id="IPR027417">
    <property type="entry name" value="P-loop_NTPase"/>
</dbReference>
<dbReference type="InterPro" id="IPR005225">
    <property type="entry name" value="Small_GTP-bd"/>
</dbReference>
<dbReference type="InterPro" id="IPR000795">
    <property type="entry name" value="T_Tr_GTP-bd_dom"/>
</dbReference>
<dbReference type="NCBIfam" id="TIGR01393">
    <property type="entry name" value="lepA"/>
    <property type="match status" value="1"/>
</dbReference>
<dbReference type="NCBIfam" id="TIGR00231">
    <property type="entry name" value="small_GTP"/>
    <property type="match status" value="1"/>
</dbReference>
<dbReference type="PANTHER" id="PTHR43512:SF4">
    <property type="entry name" value="TRANSLATION FACTOR GUF1 HOMOLOG, CHLOROPLASTIC"/>
    <property type="match status" value="1"/>
</dbReference>
<dbReference type="PANTHER" id="PTHR43512">
    <property type="entry name" value="TRANSLATION FACTOR GUF1-RELATED"/>
    <property type="match status" value="1"/>
</dbReference>
<dbReference type="Pfam" id="PF00679">
    <property type="entry name" value="EFG_C"/>
    <property type="match status" value="1"/>
</dbReference>
<dbReference type="Pfam" id="PF00009">
    <property type="entry name" value="GTP_EFTU"/>
    <property type="match status" value="1"/>
</dbReference>
<dbReference type="Pfam" id="PF03144">
    <property type="entry name" value="GTP_EFTU_D2"/>
    <property type="match status" value="1"/>
</dbReference>
<dbReference type="Pfam" id="PF06421">
    <property type="entry name" value="LepA_C"/>
    <property type="match status" value="1"/>
</dbReference>
<dbReference type="PRINTS" id="PR00315">
    <property type="entry name" value="ELONGATNFCT"/>
</dbReference>
<dbReference type="SUPFAM" id="SSF54980">
    <property type="entry name" value="EF-G C-terminal domain-like"/>
    <property type="match status" value="2"/>
</dbReference>
<dbReference type="SUPFAM" id="SSF52540">
    <property type="entry name" value="P-loop containing nucleoside triphosphate hydrolases"/>
    <property type="match status" value="1"/>
</dbReference>
<dbReference type="PROSITE" id="PS00301">
    <property type="entry name" value="G_TR_1"/>
    <property type="match status" value="1"/>
</dbReference>
<dbReference type="PROSITE" id="PS51722">
    <property type="entry name" value="G_TR_2"/>
    <property type="match status" value="1"/>
</dbReference>
<name>LEPA_ECOLI</name>
<comment type="function">
    <text evidence="1 2 3">Required for accurate and efficient protein synthesis under certain stress conditions. May act as a fidelity factor of the translation reaction, by catalyzing a one-codon backward translocation of tRNAs on improperly translocated ribosomes. Back-translocation proceeds from a post-translocation (POST) complex to a pre-translocation (PRE) complex, thus giving elongation factor G a second chance to translocate the tRNAs correctly. Binds to ribosomes in a GTP-dependent manner.</text>
</comment>
<comment type="catalytic activity">
    <reaction evidence="1 3">
        <text>GTP + H2O = GDP + phosphate + H(+)</text>
        <dbReference type="Rhea" id="RHEA:19669"/>
        <dbReference type="ChEBI" id="CHEBI:15377"/>
        <dbReference type="ChEBI" id="CHEBI:15378"/>
        <dbReference type="ChEBI" id="CHEBI:37565"/>
        <dbReference type="ChEBI" id="CHEBI:43474"/>
        <dbReference type="ChEBI" id="CHEBI:58189"/>
        <dbReference type="EC" id="3.6.5.n1"/>
    </reaction>
</comment>
<comment type="interaction">
    <interactant intactId="EBI-544544">
        <id>P60785</id>
    </interactant>
    <interactant intactId="EBI-544544">
        <id>P60785</id>
        <label>lepA</label>
    </interactant>
    <organismsDiffer>false</organismsDiffer>
    <experiments>2</experiments>
</comment>
<comment type="interaction">
    <interactant intactId="EBI-544544">
        <id>P60785</id>
    </interactant>
    <interactant intactId="EBI-553267">
        <id>P64423</id>
        <label>zntB</label>
    </interactant>
    <organismsDiffer>false</organismsDiffer>
    <experiments>4</experiments>
</comment>
<comment type="subcellular location">
    <subcellularLocation>
        <location evidence="5">Cell inner membrane</location>
        <topology evidence="5">Peripheral membrane protein</topology>
        <orientation evidence="5">Cytoplasmic side</orientation>
    </subcellularLocation>
</comment>
<comment type="similarity">
    <text evidence="1">Belongs to the TRAFAC class translation factor GTPase superfamily. Classic translation factor GTPase family. LepA subfamily.</text>
</comment>
<gene>
    <name evidence="1" type="primary">lepA</name>
    <name type="ordered locus">b2569</name>
    <name type="ordered locus">JW2553</name>
</gene>
<feature type="chain" id="PRO_0000176271" description="Elongation factor 4">
    <location>
        <begin position="1"/>
        <end position="599"/>
    </location>
</feature>
<feature type="domain" description="tr-type G">
    <location>
        <begin position="2"/>
        <end position="184"/>
    </location>
</feature>
<feature type="binding site" evidence="1">
    <location>
        <begin position="14"/>
        <end position="19"/>
    </location>
    <ligand>
        <name>GTP</name>
        <dbReference type="ChEBI" id="CHEBI:37565"/>
    </ligand>
</feature>
<feature type="binding site" evidence="1">
    <location>
        <begin position="131"/>
        <end position="134"/>
    </location>
    <ligand>
        <name>GTP</name>
        <dbReference type="ChEBI" id="CHEBI:37565"/>
    </ligand>
</feature>
<feature type="sequence conflict" description="In Ref. 1 and 2." evidence="4" ref="1 2">
    <original>TDAVRCSAKTGVGVQDVLERLVRDIPPPEG</original>
    <variation>HRRGALFSENRRWCAGRSRTSGARHSAAGS</variation>
    <location>
        <begin position="156"/>
        <end position="185"/>
    </location>
</feature>
<feature type="sequence conflict" description="In Ref. 1 and 2." evidence="4" ref="1 2">
    <location>
        <position position="266"/>
    </location>
</feature>
<feature type="strand" evidence="6">
    <location>
        <begin position="4"/>
        <end position="10"/>
    </location>
</feature>
<feature type="helix" evidence="6">
    <location>
        <begin position="20"/>
        <end position="27"/>
    </location>
</feature>
<feature type="strand" evidence="6">
    <location>
        <begin position="58"/>
        <end position="64"/>
    </location>
</feature>
<feature type="strand" evidence="6">
    <location>
        <begin position="70"/>
        <end position="77"/>
    </location>
</feature>
<feature type="helix" evidence="6">
    <location>
        <begin position="82"/>
        <end position="84"/>
    </location>
</feature>
<feature type="helix" evidence="6">
    <location>
        <begin position="85"/>
        <end position="94"/>
    </location>
</feature>
<feature type="strand" evidence="6">
    <location>
        <begin position="96"/>
        <end position="103"/>
    </location>
</feature>
<feature type="turn" evidence="6">
    <location>
        <begin position="104"/>
        <end position="106"/>
    </location>
</feature>
<feature type="helix" evidence="6">
    <location>
        <begin position="111"/>
        <end position="121"/>
    </location>
</feature>
<feature type="strand" evidence="6">
    <location>
        <begin position="125"/>
        <end position="131"/>
    </location>
</feature>
<feature type="helix" evidence="6">
    <location>
        <begin position="140"/>
        <end position="149"/>
    </location>
</feature>
<feature type="strand" evidence="6">
    <location>
        <begin position="159"/>
        <end position="161"/>
    </location>
</feature>
<feature type="turn" evidence="6">
    <location>
        <begin position="163"/>
        <end position="165"/>
    </location>
</feature>
<feature type="helix" evidence="6">
    <location>
        <begin position="169"/>
        <end position="179"/>
    </location>
</feature>
<feature type="strand" evidence="6">
    <location>
        <begin position="192"/>
        <end position="201"/>
    </location>
</feature>
<feature type="turn" evidence="6">
    <location>
        <begin position="202"/>
        <end position="204"/>
    </location>
</feature>
<feature type="strand" evidence="6">
    <location>
        <begin position="205"/>
        <end position="215"/>
    </location>
</feature>
<feature type="strand" evidence="6">
    <location>
        <begin position="217"/>
        <end position="220"/>
    </location>
</feature>
<feature type="strand" evidence="6">
    <location>
        <begin position="222"/>
        <end position="225"/>
    </location>
</feature>
<feature type="turn" evidence="6">
    <location>
        <begin position="226"/>
        <end position="228"/>
    </location>
</feature>
<feature type="strand" evidence="6">
    <location>
        <begin position="231"/>
        <end position="233"/>
    </location>
</feature>
<feature type="strand" evidence="6">
    <location>
        <begin position="236"/>
        <end position="246"/>
    </location>
</feature>
<feature type="strand" evidence="6">
    <location>
        <begin position="248"/>
        <end position="250"/>
    </location>
</feature>
<feature type="strand" evidence="6">
    <location>
        <begin position="255"/>
        <end position="259"/>
    </location>
</feature>
<feature type="helix" evidence="6">
    <location>
        <begin position="265"/>
        <end position="267"/>
    </location>
</feature>
<feature type="strand" evidence="6">
    <location>
        <begin position="273"/>
        <end position="279"/>
    </location>
</feature>
<feature type="strand" evidence="6">
    <location>
        <begin position="295"/>
        <end position="303"/>
    </location>
</feature>
<feature type="helix" evidence="6">
    <location>
        <begin position="304"/>
        <end position="306"/>
    </location>
</feature>
<feature type="helix" evidence="6">
    <location>
        <begin position="307"/>
        <end position="318"/>
    </location>
</feature>
<feature type="strand" evidence="6">
    <location>
        <begin position="325"/>
        <end position="331"/>
    </location>
</feature>
<feature type="turn" evidence="6">
    <location>
        <begin position="332"/>
        <end position="334"/>
    </location>
</feature>
<feature type="strand" evidence="6">
    <location>
        <begin position="335"/>
        <end position="344"/>
    </location>
</feature>
<feature type="helix" evidence="6">
    <location>
        <begin position="345"/>
        <end position="357"/>
    </location>
</feature>
<feature type="strand" evidence="6">
    <location>
        <begin position="363"/>
        <end position="365"/>
    </location>
</feature>
<feature type="strand" evidence="6">
    <location>
        <begin position="372"/>
        <end position="379"/>
    </location>
</feature>
<feature type="strand" evidence="6">
    <location>
        <begin position="381"/>
        <end position="386"/>
    </location>
</feature>
<feature type="helix" evidence="6">
    <location>
        <begin position="387"/>
        <end position="389"/>
    </location>
</feature>
<feature type="helix" evidence="6">
    <location>
        <begin position="393"/>
        <end position="395"/>
    </location>
</feature>
<feature type="strand" evidence="6">
    <location>
        <begin position="396"/>
        <end position="411"/>
    </location>
</feature>
<feature type="helix" evidence="6">
    <location>
        <begin position="412"/>
        <end position="414"/>
    </location>
</feature>
<feature type="helix" evidence="6">
    <location>
        <begin position="415"/>
        <end position="424"/>
    </location>
</feature>
<feature type="strand" evidence="6">
    <location>
        <begin position="428"/>
        <end position="433"/>
    </location>
</feature>
<feature type="strand" evidence="6">
    <location>
        <begin position="438"/>
        <end position="446"/>
    </location>
</feature>
<feature type="helix" evidence="6">
    <location>
        <begin position="447"/>
        <end position="451"/>
    </location>
</feature>
<feature type="turn" evidence="6">
    <location>
        <begin position="452"/>
        <end position="454"/>
    </location>
</feature>
<feature type="helix" evidence="6">
    <location>
        <begin position="455"/>
        <end position="461"/>
    </location>
</feature>
<feature type="strand" evidence="6">
    <location>
        <begin position="467"/>
        <end position="477"/>
    </location>
</feature>
<feature type="strand" evidence="6">
    <location>
        <begin position="480"/>
        <end position="487"/>
    </location>
</feature>
<feature type="strand" evidence="6">
    <location>
        <begin position="490"/>
        <end position="500"/>
    </location>
</feature>
<feature type="helix" evidence="6">
    <location>
        <begin position="501"/>
        <end position="503"/>
    </location>
</feature>
<feature type="helix" evidence="6">
    <location>
        <begin position="504"/>
        <end position="518"/>
    </location>
</feature>
<feature type="strand" evidence="6">
    <location>
        <begin position="526"/>
        <end position="532"/>
    </location>
</feature>
<feature type="strand" evidence="6">
    <location>
        <begin position="535"/>
        <end position="542"/>
    </location>
</feature>
<keyword id="KW-0002">3D-structure</keyword>
<keyword id="KW-0997">Cell inner membrane</keyword>
<keyword id="KW-1003">Cell membrane</keyword>
<keyword id="KW-0342">GTP-binding</keyword>
<keyword id="KW-0378">Hydrolase</keyword>
<keyword id="KW-0472">Membrane</keyword>
<keyword id="KW-0547">Nucleotide-binding</keyword>
<keyword id="KW-0648">Protein biosynthesis</keyword>
<keyword id="KW-1185">Reference proteome</keyword>
<proteinExistence type="evidence at protein level"/>
<sequence length="599" mass="66570">MKNIRNFSIIAHIDHGKSTLSDRIIQICGGLSDREMEAQVLDSMDLERERGITIKAQSVTLDYKASDGETYQLNFIDTPGHVDFSYEVSRSLAACEGALLVVDAGQGVEAQTLANCYTAMEMDLEVVPVLNKIDLPAADPERVAEEIEDIVGIDATDAVRCSAKTGVGVQDVLERLVRDIPPPEGDPEGPLQALIIDSWFDNYLGVVSLIRIKNGTLRKGDKVKVMSTGQTYNADRLGIFTPKQVDRTELKCGEVGWLVCAIKDIHGAPVGDTLTLARNPAEKALPGFKKVKPQVYAGLFPVSSDDYEAFRDALGKLSLNDASLFYEPESSSALGFGFRCGFLGLLHMEIIQERLEREYDLDLITTAPTVVYEVETTSREVIYVDSPSKLPAVNNIYELREPIAECHMLLPQAYLGNVITLCVEKRGVQTNMVYHGNQVALTYEIPMAEVVLDFFDRLKSTSRGYASLDYNFKRFQASDMVRVDVLINGERVDALALITHRDNSQNRGRELVEKMKDLIPRQQFDIAIQAAIGTHIIARSTVKQLRKNVLAKCYGGDISRKKKLLQKQKEGKKRMKQIGNVELPQEAFLAILHVGKDNK</sequence>
<organism>
    <name type="scientific">Escherichia coli (strain K12)</name>
    <dbReference type="NCBI Taxonomy" id="83333"/>
    <lineage>
        <taxon>Bacteria</taxon>
        <taxon>Pseudomonadati</taxon>
        <taxon>Pseudomonadota</taxon>
        <taxon>Gammaproteobacteria</taxon>
        <taxon>Enterobacterales</taxon>
        <taxon>Enterobacteriaceae</taxon>
        <taxon>Escherichia</taxon>
    </lineage>
</organism>
<protein>
    <recommendedName>
        <fullName evidence="1">Elongation factor 4</fullName>
        <shortName evidence="1">EF-4</shortName>
        <ecNumber evidence="1">3.6.5.n1</ecNumber>
    </recommendedName>
    <alternativeName>
        <fullName evidence="1">Ribosomal back-translocase LepA</fullName>
    </alternativeName>
</protein>
<evidence type="ECO:0000255" key="1">
    <source>
        <dbReference type="HAMAP-Rule" id="MF_00071"/>
    </source>
</evidence>
<evidence type="ECO:0000269" key="2">
    <source>
    </source>
</evidence>
<evidence type="ECO:0000269" key="3">
    <source>
    </source>
</evidence>
<evidence type="ECO:0000305" key="4"/>
<evidence type="ECO:0000305" key="5">
    <source>
    </source>
</evidence>
<evidence type="ECO:0007829" key="6">
    <source>
        <dbReference type="PDB" id="3CB4"/>
    </source>
</evidence>